<organism>
    <name type="scientific">Staphylococcus aureus (strain bovine RF122 / ET3-1)</name>
    <dbReference type="NCBI Taxonomy" id="273036"/>
    <lineage>
        <taxon>Bacteria</taxon>
        <taxon>Bacillati</taxon>
        <taxon>Bacillota</taxon>
        <taxon>Bacilli</taxon>
        <taxon>Bacillales</taxon>
        <taxon>Staphylococcaceae</taxon>
        <taxon>Staphylococcus</taxon>
    </lineage>
</organism>
<name>ECFA1_STAAB</name>
<dbReference type="EC" id="7.-.-.-" evidence="1"/>
<dbReference type="EMBL" id="AJ938182">
    <property type="protein sequence ID" value="CAI81784.1"/>
    <property type="status" value="ALT_INIT"/>
    <property type="molecule type" value="Genomic_DNA"/>
</dbReference>
<dbReference type="RefSeq" id="WP_000389656.1">
    <property type="nucleotide sequence ID" value="NC_007622.1"/>
</dbReference>
<dbReference type="SMR" id="Q2YYM4"/>
<dbReference type="KEGG" id="sab:SAB2095c"/>
<dbReference type="HOGENOM" id="CLU_000604_1_22_9"/>
<dbReference type="GO" id="GO:0043190">
    <property type="term" value="C:ATP-binding cassette (ABC) transporter complex"/>
    <property type="evidence" value="ECO:0007669"/>
    <property type="project" value="TreeGrafter"/>
</dbReference>
<dbReference type="GO" id="GO:0005524">
    <property type="term" value="F:ATP binding"/>
    <property type="evidence" value="ECO:0007669"/>
    <property type="project" value="UniProtKB-KW"/>
</dbReference>
<dbReference type="GO" id="GO:0016887">
    <property type="term" value="F:ATP hydrolysis activity"/>
    <property type="evidence" value="ECO:0007669"/>
    <property type="project" value="InterPro"/>
</dbReference>
<dbReference type="GO" id="GO:0042626">
    <property type="term" value="F:ATPase-coupled transmembrane transporter activity"/>
    <property type="evidence" value="ECO:0007669"/>
    <property type="project" value="TreeGrafter"/>
</dbReference>
<dbReference type="CDD" id="cd03225">
    <property type="entry name" value="ABC_cobalt_CbiO_domain1"/>
    <property type="match status" value="1"/>
</dbReference>
<dbReference type="FunFam" id="3.40.50.300:FF:000224">
    <property type="entry name" value="Energy-coupling factor transporter ATP-binding protein EcfA"/>
    <property type="match status" value="1"/>
</dbReference>
<dbReference type="Gene3D" id="3.40.50.300">
    <property type="entry name" value="P-loop containing nucleotide triphosphate hydrolases"/>
    <property type="match status" value="1"/>
</dbReference>
<dbReference type="InterPro" id="IPR003593">
    <property type="entry name" value="AAA+_ATPase"/>
</dbReference>
<dbReference type="InterPro" id="IPR003439">
    <property type="entry name" value="ABC_transporter-like_ATP-bd"/>
</dbReference>
<dbReference type="InterPro" id="IPR017871">
    <property type="entry name" value="ABC_transporter-like_CS"/>
</dbReference>
<dbReference type="InterPro" id="IPR015856">
    <property type="entry name" value="ABC_transpr_CbiO/EcfA_su"/>
</dbReference>
<dbReference type="InterPro" id="IPR050095">
    <property type="entry name" value="ECF_ABC_transporter_ATP-bd"/>
</dbReference>
<dbReference type="InterPro" id="IPR030947">
    <property type="entry name" value="EcfA_1"/>
</dbReference>
<dbReference type="InterPro" id="IPR027417">
    <property type="entry name" value="P-loop_NTPase"/>
</dbReference>
<dbReference type="NCBIfam" id="TIGR04520">
    <property type="entry name" value="ECF_ATPase_1"/>
    <property type="match status" value="1"/>
</dbReference>
<dbReference type="NCBIfam" id="NF010167">
    <property type="entry name" value="PRK13648.1"/>
    <property type="match status" value="1"/>
</dbReference>
<dbReference type="PANTHER" id="PTHR43553:SF24">
    <property type="entry name" value="ENERGY-COUPLING FACTOR TRANSPORTER ATP-BINDING PROTEIN ECFA1"/>
    <property type="match status" value="1"/>
</dbReference>
<dbReference type="PANTHER" id="PTHR43553">
    <property type="entry name" value="HEAVY METAL TRANSPORTER"/>
    <property type="match status" value="1"/>
</dbReference>
<dbReference type="Pfam" id="PF00005">
    <property type="entry name" value="ABC_tran"/>
    <property type="match status" value="1"/>
</dbReference>
<dbReference type="SMART" id="SM00382">
    <property type="entry name" value="AAA"/>
    <property type="match status" value="1"/>
</dbReference>
<dbReference type="SUPFAM" id="SSF52540">
    <property type="entry name" value="P-loop containing nucleoside triphosphate hydrolases"/>
    <property type="match status" value="1"/>
</dbReference>
<dbReference type="PROSITE" id="PS00211">
    <property type="entry name" value="ABC_TRANSPORTER_1"/>
    <property type="match status" value="1"/>
</dbReference>
<dbReference type="PROSITE" id="PS50893">
    <property type="entry name" value="ABC_TRANSPORTER_2"/>
    <property type="match status" value="1"/>
</dbReference>
<dbReference type="PROSITE" id="PS51246">
    <property type="entry name" value="CBIO"/>
    <property type="match status" value="1"/>
</dbReference>
<evidence type="ECO:0000255" key="1">
    <source>
        <dbReference type="HAMAP-Rule" id="MF_01710"/>
    </source>
</evidence>
<evidence type="ECO:0000305" key="2"/>
<feature type="chain" id="PRO_0000287982" description="Energy-coupling factor transporter ATP-binding protein EcfA1">
    <location>
        <begin position="1"/>
        <end position="269"/>
    </location>
</feature>
<feature type="domain" description="ABC transporter" evidence="1">
    <location>
        <begin position="8"/>
        <end position="242"/>
    </location>
</feature>
<feature type="binding site" evidence="1">
    <location>
        <begin position="42"/>
        <end position="49"/>
    </location>
    <ligand>
        <name>ATP</name>
        <dbReference type="ChEBI" id="CHEBI:30616"/>
    </ligand>
</feature>
<proteinExistence type="inferred from homology"/>
<reference key="1">
    <citation type="journal article" date="2007" name="PLoS ONE">
        <title>Molecular correlates of host specialization in Staphylococcus aureus.</title>
        <authorList>
            <person name="Herron-Olson L."/>
            <person name="Fitzgerald J.R."/>
            <person name="Musser J.M."/>
            <person name="Kapur V."/>
        </authorList>
    </citation>
    <scope>NUCLEOTIDE SEQUENCE [LARGE SCALE GENOMIC DNA]</scope>
    <source>
        <strain>bovine RF122 / ET3-1</strain>
    </source>
</reference>
<gene>
    <name evidence="1" type="primary">ecfA1</name>
    <name type="synonym">cbiO1</name>
    <name type="ordered locus">SAB2095c</name>
</gene>
<sequence>MEDKNSVIVFKNVSFQYQSDASFTLKDVSFNIPKGQWTSIVGHNGSGKSTIAKLMIGIEKVKSGEIFYNNQAITDDNFEKLRKDIGIVFQNPDNQFVGSIVKYDVAFGLENHAVPHDEMHRRVSEALKQVDMLERADYEPNALSGGQKQRVAIASVLALNPSVIILDEATSMLDPDARQNLLDLVRKVKSEHNITIISITHDLSEAMEADHVIVMNKGTVYKEGTAIEIFDHAEGLTTIGLDLPFPIKINQMLGHQTSFLTYEGLVDQL</sequence>
<comment type="function">
    <text evidence="1">ATP-binding (A) component of a common energy-coupling factor (ECF) ABC-transporter complex. Unlike classic ABC transporters this ECF transporter provides the energy necessary to transport a number of different substrates.</text>
</comment>
<comment type="subunit">
    <text evidence="1">Forms a stable energy-coupling factor (ECF) transporter complex composed of 2 membrane-embedded substrate-binding proteins (S component), 2 ATP-binding proteins (A component) and 2 transmembrane proteins (T component).</text>
</comment>
<comment type="subcellular location">
    <subcellularLocation>
        <location evidence="1">Cell membrane</location>
        <topology evidence="1">Peripheral membrane protein</topology>
    </subcellularLocation>
</comment>
<comment type="similarity">
    <text evidence="1">Belongs to the ABC transporter superfamily. Energy-coupling factor EcfA family.</text>
</comment>
<comment type="sequence caution" evidence="2">
    <conflict type="erroneous initiation">
        <sequence resource="EMBL-CDS" id="CAI81784"/>
    </conflict>
    <text>Extended N-terminus.</text>
</comment>
<keyword id="KW-0067">ATP-binding</keyword>
<keyword id="KW-1003">Cell membrane</keyword>
<keyword id="KW-0472">Membrane</keyword>
<keyword id="KW-0547">Nucleotide-binding</keyword>
<keyword id="KW-1278">Translocase</keyword>
<keyword id="KW-0813">Transport</keyword>
<accession>Q2YYM4</accession>
<protein>
    <recommendedName>
        <fullName evidence="1">Energy-coupling factor transporter ATP-binding protein EcfA1</fullName>
        <shortName evidence="1">ECF transporter A component EcfA1</shortName>
        <ecNumber evidence="1">7.-.-.-</ecNumber>
    </recommendedName>
</protein>